<proteinExistence type="inferred from homology"/>
<keyword id="KW-0067">ATP-binding</keyword>
<keyword id="KW-0418">Kinase</keyword>
<keyword id="KW-0545">Nucleotide biosynthesis</keyword>
<keyword id="KW-0547">Nucleotide-binding</keyword>
<keyword id="KW-1185">Reference proteome</keyword>
<keyword id="KW-0808">Transferase</keyword>
<reference key="1">
    <citation type="submission" date="2003-03" db="EMBL/GenBank/DDBJ databases">
        <title>The complete genome sequence of Neisseria gonorrhoeae.</title>
        <authorList>
            <person name="Lewis L.A."/>
            <person name="Gillaspy A.F."/>
            <person name="McLaughlin R.E."/>
            <person name="Gipson M."/>
            <person name="Ducey T.F."/>
            <person name="Ownbey T."/>
            <person name="Hartman K."/>
            <person name="Nydick C."/>
            <person name="Carson M.B."/>
            <person name="Vaughn J."/>
            <person name="Thomson C."/>
            <person name="Song L."/>
            <person name="Lin S."/>
            <person name="Yuan X."/>
            <person name="Najar F."/>
            <person name="Zhan M."/>
            <person name="Ren Q."/>
            <person name="Zhu H."/>
            <person name="Qi S."/>
            <person name="Kenton S.M."/>
            <person name="Lai H."/>
            <person name="White J.D."/>
            <person name="Clifton S."/>
            <person name="Roe B.A."/>
            <person name="Dyer D.W."/>
        </authorList>
    </citation>
    <scope>NUCLEOTIDE SEQUENCE [LARGE SCALE GENOMIC DNA]</scope>
    <source>
        <strain>ATCC 700825 / FA 1090</strain>
    </source>
</reference>
<evidence type="ECO:0000255" key="1">
    <source>
        <dbReference type="HAMAP-Rule" id="MF_00165"/>
    </source>
</evidence>
<name>KTHY_NEIG1</name>
<sequence>MKPQFITLDGIDGAGKSTNLAVIKAWFERRGLPVLFTREPGGTPVGEALREILLNPETKAGLRAETLMMFAARMQHIEEVILPALSDGIHVVSDRFTDATFAYQGGGRGMPSEDIEILEHWVQGGLRPDLTLLLDVPLEVSMARIGQAREKDRFEQEQADFFMRVRGVYLDRAAACPERYAVIDSNRSLDEVRNSIEKVLDGHFGC</sequence>
<protein>
    <recommendedName>
        <fullName evidence="1">Thymidylate kinase</fullName>
        <ecNumber evidence="1">2.7.4.9</ecNumber>
    </recommendedName>
    <alternativeName>
        <fullName evidence="1">dTMP kinase</fullName>
    </alternativeName>
</protein>
<organism>
    <name type="scientific">Neisseria gonorrhoeae (strain ATCC 700825 / FA 1090)</name>
    <dbReference type="NCBI Taxonomy" id="242231"/>
    <lineage>
        <taxon>Bacteria</taxon>
        <taxon>Pseudomonadati</taxon>
        <taxon>Pseudomonadota</taxon>
        <taxon>Betaproteobacteria</taxon>
        <taxon>Neisseriales</taxon>
        <taxon>Neisseriaceae</taxon>
        <taxon>Neisseria</taxon>
    </lineage>
</organism>
<accession>Q5F9Z5</accession>
<gene>
    <name evidence="1" type="primary">tmk</name>
    <name type="ordered locus">NGO_0239</name>
</gene>
<dbReference type="EC" id="2.7.4.9" evidence="1"/>
<dbReference type="EMBL" id="AE004969">
    <property type="protein sequence ID" value="AAW88992.1"/>
    <property type="molecule type" value="Genomic_DNA"/>
</dbReference>
<dbReference type="RefSeq" id="WP_003687582.1">
    <property type="nucleotide sequence ID" value="NC_002946.2"/>
</dbReference>
<dbReference type="RefSeq" id="YP_207404.1">
    <property type="nucleotide sequence ID" value="NC_002946.2"/>
</dbReference>
<dbReference type="SMR" id="Q5F9Z5"/>
<dbReference type="STRING" id="242231.NGO_0239"/>
<dbReference type="KEGG" id="ngo:NGO_0239"/>
<dbReference type="PATRIC" id="fig|242231.10.peg.296"/>
<dbReference type="HOGENOM" id="CLU_049131_0_2_4"/>
<dbReference type="Proteomes" id="UP000000535">
    <property type="component" value="Chromosome"/>
</dbReference>
<dbReference type="GO" id="GO:0005829">
    <property type="term" value="C:cytosol"/>
    <property type="evidence" value="ECO:0007669"/>
    <property type="project" value="TreeGrafter"/>
</dbReference>
<dbReference type="GO" id="GO:0005524">
    <property type="term" value="F:ATP binding"/>
    <property type="evidence" value="ECO:0007669"/>
    <property type="project" value="UniProtKB-UniRule"/>
</dbReference>
<dbReference type="GO" id="GO:0004798">
    <property type="term" value="F:dTMP kinase activity"/>
    <property type="evidence" value="ECO:0007669"/>
    <property type="project" value="UniProtKB-UniRule"/>
</dbReference>
<dbReference type="GO" id="GO:0006233">
    <property type="term" value="P:dTDP biosynthetic process"/>
    <property type="evidence" value="ECO:0007669"/>
    <property type="project" value="InterPro"/>
</dbReference>
<dbReference type="GO" id="GO:0006235">
    <property type="term" value="P:dTTP biosynthetic process"/>
    <property type="evidence" value="ECO:0007669"/>
    <property type="project" value="UniProtKB-UniRule"/>
</dbReference>
<dbReference type="GO" id="GO:0006227">
    <property type="term" value="P:dUDP biosynthetic process"/>
    <property type="evidence" value="ECO:0007669"/>
    <property type="project" value="TreeGrafter"/>
</dbReference>
<dbReference type="CDD" id="cd01672">
    <property type="entry name" value="TMPK"/>
    <property type="match status" value="1"/>
</dbReference>
<dbReference type="FunFam" id="3.40.50.300:FF:000225">
    <property type="entry name" value="Thymidylate kinase"/>
    <property type="match status" value="1"/>
</dbReference>
<dbReference type="Gene3D" id="3.40.50.300">
    <property type="entry name" value="P-loop containing nucleotide triphosphate hydrolases"/>
    <property type="match status" value="1"/>
</dbReference>
<dbReference type="HAMAP" id="MF_00165">
    <property type="entry name" value="Thymidylate_kinase"/>
    <property type="match status" value="1"/>
</dbReference>
<dbReference type="InterPro" id="IPR027417">
    <property type="entry name" value="P-loop_NTPase"/>
</dbReference>
<dbReference type="InterPro" id="IPR039430">
    <property type="entry name" value="Thymidylate_kin-like_dom"/>
</dbReference>
<dbReference type="InterPro" id="IPR018094">
    <property type="entry name" value="Thymidylate_kinase"/>
</dbReference>
<dbReference type="NCBIfam" id="TIGR00041">
    <property type="entry name" value="DTMP_kinase"/>
    <property type="match status" value="1"/>
</dbReference>
<dbReference type="PANTHER" id="PTHR10344">
    <property type="entry name" value="THYMIDYLATE KINASE"/>
    <property type="match status" value="1"/>
</dbReference>
<dbReference type="PANTHER" id="PTHR10344:SF4">
    <property type="entry name" value="UMP-CMP KINASE 2, MITOCHONDRIAL"/>
    <property type="match status" value="1"/>
</dbReference>
<dbReference type="Pfam" id="PF02223">
    <property type="entry name" value="Thymidylate_kin"/>
    <property type="match status" value="1"/>
</dbReference>
<dbReference type="SUPFAM" id="SSF52540">
    <property type="entry name" value="P-loop containing nucleoside triphosphate hydrolases"/>
    <property type="match status" value="1"/>
</dbReference>
<comment type="function">
    <text evidence="1">Phosphorylation of dTMP to form dTDP in both de novo and salvage pathways of dTTP synthesis.</text>
</comment>
<comment type="catalytic activity">
    <reaction evidence="1">
        <text>dTMP + ATP = dTDP + ADP</text>
        <dbReference type="Rhea" id="RHEA:13517"/>
        <dbReference type="ChEBI" id="CHEBI:30616"/>
        <dbReference type="ChEBI" id="CHEBI:58369"/>
        <dbReference type="ChEBI" id="CHEBI:63528"/>
        <dbReference type="ChEBI" id="CHEBI:456216"/>
        <dbReference type="EC" id="2.7.4.9"/>
    </reaction>
</comment>
<comment type="similarity">
    <text evidence="1">Belongs to the thymidylate kinase family.</text>
</comment>
<feature type="chain" id="PRO_0000155310" description="Thymidylate kinase">
    <location>
        <begin position="1"/>
        <end position="206"/>
    </location>
</feature>
<feature type="binding site" evidence="1">
    <location>
        <begin position="10"/>
        <end position="17"/>
    </location>
    <ligand>
        <name>ATP</name>
        <dbReference type="ChEBI" id="CHEBI:30616"/>
    </ligand>
</feature>